<feature type="chain" id="PRO_1000052798" description="Large ribosomal subunit protein uL5">
    <location>
        <begin position="1"/>
        <end position="179"/>
    </location>
</feature>
<keyword id="KW-0687">Ribonucleoprotein</keyword>
<keyword id="KW-0689">Ribosomal protein</keyword>
<keyword id="KW-0694">RNA-binding</keyword>
<keyword id="KW-0699">rRNA-binding</keyword>
<keyword id="KW-0820">tRNA-binding</keyword>
<proteinExistence type="inferred from homology"/>
<protein>
    <recommendedName>
        <fullName evidence="1">Large ribosomal subunit protein uL5</fullName>
    </recommendedName>
    <alternativeName>
        <fullName evidence="2">50S ribosomal protein L5</fullName>
    </alternativeName>
</protein>
<dbReference type="EMBL" id="CP000744">
    <property type="protein sequence ID" value="ABR82348.1"/>
    <property type="molecule type" value="Genomic_DNA"/>
</dbReference>
<dbReference type="RefSeq" id="WP_003152266.1">
    <property type="nucleotide sequence ID" value="NC_009656.1"/>
</dbReference>
<dbReference type="SMR" id="A6UZK0"/>
<dbReference type="GeneID" id="77219210"/>
<dbReference type="KEGG" id="pap:PSPA7_0849"/>
<dbReference type="HOGENOM" id="CLU_061015_2_1_6"/>
<dbReference type="Proteomes" id="UP000001582">
    <property type="component" value="Chromosome"/>
</dbReference>
<dbReference type="GO" id="GO:1990904">
    <property type="term" value="C:ribonucleoprotein complex"/>
    <property type="evidence" value="ECO:0007669"/>
    <property type="project" value="UniProtKB-KW"/>
</dbReference>
<dbReference type="GO" id="GO:0005840">
    <property type="term" value="C:ribosome"/>
    <property type="evidence" value="ECO:0007669"/>
    <property type="project" value="UniProtKB-KW"/>
</dbReference>
<dbReference type="GO" id="GO:0019843">
    <property type="term" value="F:rRNA binding"/>
    <property type="evidence" value="ECO:0007669"/>
    <property type="project" value="UniProtKB-UniRule"/>
</dbReference>
<dbReference type="GO" id="GO:0003735">
    <property type="term" value="F:structural constituent of ribosome"/>
    <property type="evidence" value="ECO:0007669"/>
    <property type="project" value="InterPro"/>
</dbReference>
<dbReference type="GO" id="GO:0000049">
    <property type="term" value="F:tRNA binding"/>
    <property type="evidence" value="ECO:0007669"/>
    <property type="project" value="UniProtKB-UniRule"/>
</dbReference>
<dbReference type="GO" id="GO:0006412">
    <property type="term" value="P:translation"/>
    <property type="evidence" value="ECO:0007669"/>
    <property type="project" value="UniProtKB-UniRule"/>
</dbReference>
<dbReference type="FunFam" id="3.30.1440.10:FF:000001">
    <property type="entry name" value="50S ribosomal protein L5"/>
    <property type="match status" value="1"/>
</dbReference>
<dbReference type="Gene3D" id="3.30.1440.10">
    <property type="match status" value="1"/>
</dbReference>
<dbReference type="HAMAP" id="MF_01333_B">
    <property type="entry name" value="Ribosomal_uL5_B"/>
    <property type="match status" value="1"/>
</dbReference>
<dbReference type="InterPro" id="IPR002132">
    <property type="entry name" value="Ribosomal_uL5"/>
</dbReference>
<dbReference type="InterPro" id="IPR020930">
    <property type="entry name" value="Ribosomal_uL5_bac-type"/>
</dbReference>
<dbReference type="InterPro" id="IPR031309">
    <property type="entry name" value="Ribosomal_uL5_C"/>
</dbReference>
<dbReference type="InterPro" id="IPR020929">
    <property type="entry name" value="Ribosomal_uL5_CS"/>
</dbReference>
<dbReference type="InterPro" id="IPR022803">
    <property type="entry name" value="Ribosomal_uL5_dom_sf"/>
</dbReference>
<dbReference type="InterPro" id="IPR031310">
    <property type="entry name" value="Ribosomal_uL5_N"/>
</dbReference>
<dbReference type="NCBIfam" id="NF000585">
    <property type="entry name" value="PRK00010.1"/>
    <property type="match status" value="1"/>
</dbReference>
<dbReference type="PANTHER" id="PTHR11994">
    <property type="entry name" value="60S RIBOSOMAL PROTEIN L11-RELATED"/>
    <property type="match status" value="1"/>
</dbReference>
<dbReference type="Pfam" id="PF00281">
    <property type="entry name" value="Ribosomal_L5"/>
    <property type="match status" value="1"/>
</dbReference>
<dbReference type="Pfam" id="PF00673">
    <property type="entry name" value="Ribosomal_L5_C"/>
    <property type="match status" value="1"/>
</dbReference>
<dbReference type="PIRSF" id="PIRSF002161">
    <property type="entry name" value="Ribosomal_L5"/>
    <property type="match status" value="1"/>
</dbReference>
<dbReference type="SUPFAM" id="SSF55282">
    <property type="entry name" value="RL5-like"/>
    <property type="match status" value="1"/>
</dbReference>
<dbReference type="PROSITE" id="PS00358">
    <property type="entry name" value="RIBOSOMAL_L5"/>
    <property type="match status" value="1"/>
</dbReference>
<organism>
    <name type="scientific">Pseudomonas paraeruginosa (strain DSM 24068 / PA7)</name>
    <name type="common">Pseudomonas aeruginosa (strain PA7)</name>
    <dbReference type="NCBI Taxonomy" id="381754"/>
    <lineage>
        <taxon>Bacteria</taxon>
        <taxon>Pseudomonadati</taxon>
        <taxon>Pseudomonadota</taxon>
        <taxon>Gammaproteobacteria</taxon>
        <taxon>Pseudomonadales</taxon>
        <taxon>Pseudomonadaceae</taxon>
        <taxon>Pseudomonas</taxon>
        <taxon>Pseudomonas paraeruginosa</taxon>
    </lineage>
</organism>
<name>RL5_PSEP7</name>
<evidence type="ECO:0000255" key="1">
    <source>
        <dbReference type="HAMAP-Rule" id="MF_01333"/>
    </source>
</evidence>
<evidence type="ECO:0000305" key="2"/>
<gene>
    <name evidence="1" type="primary">rplE</name>
    <name type="ordered locus">PSPA7_0849</name>
</gene>
<comment type="function">
    <text evidence="1">This is one of the proteins that bind and probably mediate the attachment of the 5S RNA into the large ribosomal subunit, where it forms part of the central protuberance. In the 70S ribosome it contacts protein S13 of the 30S subunit (bridge B1b), connecting the 2 subunits; this bridge is implicated in subunit movement. Contacts the P site tRNA; the 5S rRNA and some of its associated proteins might help stabilize positioning of ribosome-bound tRNAs.</text>
</comment>
<comment type="subunit">
    <text evidence="1">Part of the 50S ribosomal subunit; part of the 5S rRNA/L5/L18/L25 subcomplex. Contacts the 5S rRNA and the P site tRNA. Forms a bridge to the 30S subunit in the 70S ribosome.</text>
</comment>
<comment type="similarity">
    <text evidence="1">Belongs to the universal ribosomal protein uL5 family.</text>
</comment>
<accession>A6UZK0</accession>
<reference key="1">
    <citation type="submission" date="2007-06" db="EMBL/GenBank/DDBJ databases">
        <authorList>
            <person name="Dodson R.J."/>
            <person name="Harkins D."/>
            <person name="Paulsen I.T."/>
        </authorList>
    </citation>
    <scope>NUCLEOTIDE SEQUENCE [LARGE SCALE GENOMIC DNA]</scope>
    <source>
        <strain>DSM 24068 / PA7</strain>
    </source>
</reference>
<sequence>MARLKEIYRKEIAPKLKEELQLANVMEVPRVTKITLNMGLGEAVGDKKIIENAVADLEKITGQKPIVTYARKSIAGFKIREGWPIGVKVTLRSDRMYEFLDRLLSISLPRVRDFRGLNAKSFDGRGNYSMGVKEQIIFPEIDYDKIDALRGLDITLTTTARTDDEGRALLRAFKFPFRN</sequence>